<feature type="initiator methionine" description="Removed" evidence="2">
    <location>
        <position position="1"/>
    </location>
</feature>
<feature type="chain" id="PRO_0000399470" description="Protein BONZAI 3">
    <location>
        <begin position="2"/>
        <end position="584"/>
    </location>
</feature>
<feature type="domain" description="C2 1" evidence="3">
    <location>
        <begin position="34"/>
        <end position="167"/>
    </location>
</feature>
<feature type="domain" description="C2 2" evidence="3">
    <location>
        <begin position="178"/>
        <end position="305"/>
    </location>
</feature>
<feature type="domain" description="VWFA" evidence="4">
    <location>
        <begin position="344"/>
        <end position="563"/>
    </location>
</feature>
<feature type="region of interest" description="Disordered" evidence="5">
    <location>
        <begin position="1"/>
        <end position="23"/>
    </location>
</feature>
<feature type="binding site" evidence="3">
    <location>
        <position position="67"/>
    </location>
    <ligand>
        <name>Ca(2+)</name>
        <dbReference type="ChEBI" id="CHEBI:29108"/>
        <label>1</label>
    </ligand>
</feature>
<feature type="binding site" evidence="3">
    <location>
        <position position="67"/>
    </location>
    <ligand>
        <name>Ca(2+)</name>
        <dbReference type="ChEBI" id="CHEBI:29108"/>
        <label>2</label>
    </ligand>
</feature>
<feature type="binding site" evidence="3">
    <location>
        <position position="73"/>
    </location>
    <ligand>
        <name>Ca(2+)</name>
        <dbReference type="ChEBI" id="CHEBI:29108"/>
        <label>1</label>
    </ligand>
</feature>
<feature type="binding site" evidence="3">
    <location>
        <position position="126"/>
    </location>
    <ligand>
        <name>Ca(2+)</name>
        <dbReference type="ChEBI" id="CHEBI:29108"/>
        <label>1</label>
    </ligand>
</feature>
<feature type="binding site" evidence="3">
    <location>
        <position position="126"/>
    </location>
    <ligand>
        <name>Ca(2+)</name>
        <dbReference type="ChEBI" id="CHEBI:29108"/>
        <label>2</label>
    </ligand>
</feature>
<feature type="binding site" evidence="3">
    <location>
        <position position="128"/>
    </location>
    <ligand>
        <name>Ca(2+)</name>
        <dbReference type="ChEBI" id="CHEBI:29108"/>
        <label>1</label>
    </ligand>
</feature>
<feature type="binding site" evidence="3">
    <location>
        <position position="128"/>
    </location>
    <ligand>
        <name>Ca(2+)</name>
        <dbReference type="ChEBI" id="CHEBI:29108"/>
        <label>2</label>
    </ligand>
</feature>
<feature type="binding site" evidence="3">
    <location>
        <position position="145"/>
    </location>
    <ligand>
        <name>Ca(2+)</name>
        <dbReference type="ChEBI" id="CHEBI:29108"/>
        <label>2</label>
    </ligand>
</feature>
<feature type="lipid moiety-binding region" description="N-myristoyl glycine" evidence="2">
    <location>
        <position position="2"/>
    </location>
</feature>
<dbReference type="EMBL" id="AY741136">
    <property type="protein sequence ID" value="AAU89273.1"/>
    <property type="molecule type" value="mRNA"/>
</dbReference>
<dbReference type="EMBL" id="AC000106">
    <property type="protein sequence ID" value="AAB70417.1"/>
    <property type="status" value="ALT_SEQ"/>
    <property type="molecule type" value="Genomic_DNA"/>
</dbReference>
<dbReference type="EMBL" id="CP002684">
    <property type="protein sequence ID" value="AEE28360.1"/>
    <property type="molecule type" value="Genomic_DNA"/>
</dbReference>
<dbReference type="EMBL" id="DQ459165">
    <property type="protein sequence ID" value="ABE97164.1"/>
    <property type="status" value="ALT_FRAME"/>
    <property type="molecule type" value="mRNA"/>
</dbReference>
<dbReference type="PIR" id="D86220">
    <property type="entry name" value="D86220"/>
</dbReference>
<dbReference type="RefSeq" id="NP_172362.3">
    <property type="nucleotide sequence ID" value="NM_100759.4"/>
</dbReference>
<dbReference type="SMR" id="Q5XQC7"/>
<dbReference type="BioGRID" id="22649">
    <property type="interactions" value="1"/>
</dbReference>
<dbReference type="FunCoup" id="Q5XQC7">
    <property type="interactions" value="77"/>
</dbReference>
<dbReference type="IntAct" id="Q5XQC7">
    <property type="interactions" value="2"/>
</dbReference>
<dbReference type="STRING" id="3702.Q5XQC7"/>
<dbReference type="PaxDb" id="3702-AT1G08860.1"/>
<dbReference type="ProteomicsDB" id="240408"/>
<dbReference type="EnsemblPlants" id="AT1G08860.1">
    <property type="protein sequence ID" value="AT1G08860.1"/>
    <property type="gene ID" value="AT1G08860"/>
</dbReference>
<dbReference type="GeneID" id="837408"/>
<dbReference type="Gramene" id="AT1G08860.1">
    <property type="protein sequence ID" value="AT1G08860.1"/>
    <property type="gene ID" value="AT1G08860"/>
</dbReference>
<dbReference type="KEGG" id="ath:AT1G08860"/>
<dbReference type="Araport" id="AT1G08860"/>
<dbReference type="TAIR" id="AT1G08860">
    <property type="gene designation" value="BON3"/>
</dbReference>
<dbReference type="eggNOG" id="KOG1327">
    <property type="taxonomic scope" value="Eukaryota"/>
</dbReference>
<dbReference type="HOGENOM" id="CLU_020452_3_1_1"/>
<dbReference type="InParanoid" id="Q5XQC7"/>
<dbReference type="OMA" id="EMAAQCV"/>
<dbReference type="PhylomeDB" id="Q5XQC7"/>
<dbReference type="PRO" id="PR:Q5XQC7"/>
<dbReference type="Proteomes" id="UP000006548">
    <property type="component" value="Chromosome 1"/>
</dbReference>
<dbReference type="ExpressionAtlas" id="Q5XQC7">
    <property type="expression patterns" value="baseline and differential"/>
</dbReference>
<dbReference type="GO" id="GO:0005886">
    <property type="term" value="C:plasma membrane"/>
    <property type="evidence" value="ECO:0000314"/>
    <property type="project" value="TAIR"/>
</dbReference>
<dbReference type="GO" id="GO:0005544">
    <property type="term" value="F:calcium-dependent phospholipid binding"/>
    <property type="evidence" value="ECO:0007669"/>
    <property type="project" value="InterPro"/>
</dbReference>
<dbReference type="GO" id="GO:0046872">
    <property type="term" value="F:metal ion binding"/>
    <property type="evidence" value="ECO:0007669"/>
    <property type="project" value="UniProtKB-KW"/>
</dbReference>
<dbReference type="GO" id="GO:0006952">
    <property type="term" value="P:defense response"/>
    <property type="evidence" value="ECO:0007669"/>
    <property type="project" value="UniProtKB-KW"/>
</dbReference>
<dbReference type="GO" id="GO:0090332">
    <property type="term" value="P:stomatal closure"/>
    <property type="evidence" value="ECO:0000315"/>
    <property type="project" value="TAIR"/>
</dbReference>
<dbReference type="CDD" id="cd04048">
    <property type="entry name" value="C2A_Copine"/>
    <property type="match status" value="1"/>
</dbReference>
<dbReference type="CDD" id="cd04047">
    <property type="entry name" value="C2B_Copine"/>
    <property type="match status" value="1"/>
</dbReference>
<dbReference type="CDD" id="cd01459">
    <property type="entry name" value="vWA_copine_like"/>
    <property type="match status" value="1"/>
</dbReference>
<dbReference type="FunFam" id="2.60.40.150:FF:000168">
    <property type="entry name" value="Protein BONZAI 1"/>
    <property type="match status" value="1"/>
</dbReference>
<dbReference type="FunFam" id="2.60.40.150:FF:000186">
    <property type="entry name" value="Protein BONZAI 3"/>
    <property type="match status" value="1"/>
</dbReference>
<dbReference type="Gene3D" id="2.60.40.150">
    <property type="entry name" value="C2 domain"/>
    <property type="match status" value="2"/>
</dbReference>
<dbReference type="InterPro" id="IPR000008">
    <property type="entry name" value="C2_dom"/>
</dbReference>
<dbReference type="InterPro" id="IPR035892">
    <property type="entry name" value="C2_domain_sf"/>
</dbReference>
<dbReference type="InterPro" id="IPR037768">
    <property type="entry name" value="C2B_Copine"/>
</dbReference>
<dbReference type="InterPro" id="IPR045052">
    <property type="entry name" value="Copine"/>
</dbReference>
<dbReference type="InterPro" id="IPR010734">
    <property type="entry name" value="Copine_C"/>
</dbReference>
<dbReference type="InterPro" id="IPR002035">
    <property type="entry name" value="VWF_A"/>
</dbReference>
<dbReference type="InterPro" id="IPR036465">
    <property type="entry name" value="vWFA_dom_sf"/>
</dbReference>
<dbReference type="PANTHER" id="PTHR10857">
    <property type="entry name" value="COPINE"/>
    <property type="match status" value="1"/>
</dbReference>
<dbReference type="PANTHER" id="PTHR10857:SF120">
    <property type="entry name" value="PROTEIN BONZAI 3"/>
    <property type="match status" value="1"/>
</dbReference>
<dbReference type="Pfam" id="PF00168">
    <property type="entry name" value="C2"/>
    <property type="match status" value="2"/>
</dbReference>
<dbReference type="Pfam" id="PF07002">
    <property type="entry name" value="Copine"/>
    <property type="match status" value="1"/>
</dbReference>
<dbReference type="SMART" id="SM00239">
    <property type="entry name" value="C2"/>
    <property type="match status" value="2"/>
</dbReference>
<dbReference type="SMART" id="SM00327">
    <property type="entry name" value="VWA"/>
    <property type="match status" value="1"/>
</dbReference>
<dbReference type="SUPFAM" id="SSF49562">
    <property type="entry name" value="C2 domain (Calcium/lipid-binding domain, CaLB)"/>
    <property type="match status" value="2"/>
</dbReference>
<dbReference type="SUPFAM" id="SSF53300">
    <property type="entry name" value="vWA-like"/>
    <property type="match status" value="1"/>
</dbReference>
<dbReference type="PROSITE" id="PS50004">
    <property type="entry name" value="C2"/>
    <property type="match status" value="2"/>
</dbReference>
<dbReference type="PROSITE" id="PS50234">
    <property type="entry name" value="VWFA"/>
    <property type="match status" value="1"/>
</dbReference>
<sequence>MGGCLSGDVKGGKQAIGGVQQRPTSSTIANNAAHNDAVDFFFRSRGQYPLFSQIELTLSASNLLDCDITSKSDPMAVMYLRKKDGRLEEIGRTEVILNNLNPKWIEKITVSFQFEAVQTLVFHVYDVDTRYHNVPVKTLKLKDQDFLGEGTCVLSEIMTRQNRTLTLTLTGNVRAGVNRNLGTLSIQAEETVASKTVAEINFRCVNLDNKDLFSKSDPFLRISRVVETSAAVPICRTEVVDNNLNPMWRPVCLTMQQFGSKDTPLVIECLDFNTSGNHELIGKTEKSVAELERLCLQKEAANFVYPSLSHGRNKVLKGQLIVDRYVEKVQYSFLDYISSGFELNFMVAVDFTASNGDPRTPSSLHYIDPSGRLNSYQQAIMEVGEVIQFYDSDKRFPAWGFGGRTSDGSVSHAFNLNGASYGDEVVGVEGIMVAYASALRNVSLAGPTLFSNVVDKAAHTASQSLSQNSPKYFVLLIITDGVLTDMAGTVDALVRASDLPLSVLIVGVGNTDFKQMEMLDADNGRRLESSTGRIATRDIVQFVPMKDIHSGLVSVVQALLEELPGQFLTYVRSRKINPIGAPAI</sequence>
<accession>Q5XQC7</accession>
<accession>O04042</accession>
<accession>Q1KS96</accession>
<proteinExistence type="evidence at protein level"/>
<gene>
    <name type="primary">BON3</name>
    <name type="ordered locus">At1g08860</name>
    <name type="ORF">F7G19.25</name>
</gene>
<keyword id="KW-0106">Calcium</keyword>
<keyword id="KW-1003">Cell membrane</keyword>
<keyword id="KW-0449">Lipoprotein</keyword>
<keyword id="KW-0472">Membrane</keyword>
<keyword id="KW-0479">Metal-binding</keyword>
<keyword id="KW-0519">Myristate</keyword>
<keyword id="KW-0611">Plant defense</keyword>
<keyword id="KW-1185">Reference proteome</keyword>
<keyword id="KW-0677">Repeat</keyword>
<name>BON3_ARATH</name>
<evidence type="ECO:0000250" key="1"/>
<evidence type="ECO:0000255" key="2"/>
<evidence type="ECO:0000255" key="3">
    <source>
        <dbReference type="PROSITE-ProRule" id="PRU00041"/>
    </source>
</evidence>
<evidence type="ECO:0000255" key="4">
    <source>
        <dbReference type="PROSITE-ProRule" id="PRU00219"/>
    </source>
</evidence>
<evidence type="ECO:0000256" key="5">
    <source>
        <dbReference type="SAM" id="MobiDB-lite"/>
    </source>
</evidence>
<evidence type="ECO:0000269" key="6">
    <source>
    </source>
</evidence>
<evidence type="ECO:0000269" key="7">
    <source>
    </source>
</evidence>
<evidence type="ECO:0000269" key="8">
    <source>
    </source>
</evidence>
<evidence type="ECO:0000305" key="9"/>
<reference key="1">
    <citation type="journal article" date="2006" name="Plant J.">
        <title>The BON/CPN gene family represses cell death and promotes cell growth in Arabidopsis.</title>
        <authorList>
            <person name="Yang S."/>
            <person name="Yang H."/>
            <person name="Grisafi P."/>
            <person name="Sanchatjate S."/>
            <person name="Fink G.R."/>
            <person name="Sun Q."/>
            <person name="Hua J."/>
        </authorList>
    </citation>
    <scope>NUCLEOTIDE SEQUENCE [MRNA]</scope>
    <scope>FUNCTION</scope>
    <scope>DISRUPTION PHENOTYPE</scope>
    <scope>TISSUE SPECIFICITY</scope>
    <scope>GENE FAMILY</scope>
    <scope>NOMENCLATURE</scope>
</reference>
<reference key="2">
    <citation type="journal article" date="2000" name="Nature">
        <title>Sequence and analysis of chromosome 1 of the plant Arabidopsis thaliana.</title>
        <authorList>
            <person name="Theologis A."/>
            <person name="Ecker J.R."/>
            <person name="Palm C.J."/>
            <person name="Federspiel N.A."/>
            <person name="Kaul S."/>
            <person name="White O."/>
            <person name="Alonso J."/>
            <person name="Altafi H."/>
            <person name="Araujo R."/>
            <person name="Bowman C.L."/>
            <person name="Brooks S.Y."/>
            <person name="Buehler E."/>
            <person name="Chan A."/>
            <person name="Chao Q."/>
            <person name="Chen H."/>
            <person name="Cheuk R.F."/>
            <person name="Chin C.W."/>
            <person name="Chung M.K."/>
            <person name="Conn L."/>
            <person name="Conway A.B."/>
            <person name="Conway A.R."/>
            <person name="Creasy T.H."/>
            <person name="Dewar K."/>
            <person name="Dunn P."/>
            <person name="Etgu P."/>
            <person name="Feldblyum T.V."/>
            <person name="Feng J.-D."/>
            <person name="Fong B."/>
            <person name="Fujii C.Y."/>
            <person name="Gill J.E."/>
            <person name="Goldsmith A.D."/>
            <person name="Haas B."/>
            <person name="Hansen N.F."/>
            <person name="Hughes B."/>
            <person name="Huizar L."/>
            <person name="Hunter J.L."/>
            <person name="Jenkins J."/>
            <person name="Johnson-Hopson C."/>
            <person name="Khan S."/>
            <person name="Khaykin E."/>
            <person name="Kim C.J."/>
            <person name="Koo H.L."/>
            <person name="Kremenetskaia I."/>
            <person name="Kurtz D.B."/>
            <person name="Kwan A."/>
            <person name="Lam B."/>
            <person name="Langin-Hooper S."/>
            <person name="Lee A."/>
            <person name="Lee J.M."/>
            <person name="Lenz C.A."/>
            <person name="Li J.H."/>
            <person name="Li Y.-P."/>
            <person name="Lin X."/>
            <person name="Liu S.X."/>
            <person name="Liu Z.A."/>
            <person name="Luros J.S."/>
            <person name="Maiti R."/>
            <person name="Marziali A."/>
            <person name="Militscher J."/>
            <person name="Miranda M."/>
            <person name="Nguyen M."/>
            <person name="Nierman W.C."/>
            <person name="Osborne B.I."/>
            <person name="Pai G."/>
            <person name="Peterson J."/>
            <person name="Pham P.K."/>
            <person name="Rizzo M."/>
            <person name="Rooney T."/>
            <person name="Rowley D."/>
            <person name="Sakano H."/>
            <person name="Salzberg S.L."/>
            <person name="Schwartz J.R."/>
            <person name="Shinn P."/>
            <person name="Southwick A.M."/>
            <person name="Sun H."/>
            <person name="Tallon L.J."/>
            <person name="Tambunga G."/>
            <person name="Toriumi M.J."/>
            <person name="Town C.D."/>
            <person name="Utterback T."/>
            <person name="Van Aken S."/>
            <person name="Vaysberg M."/>
            <person name="Vysotskaia V.S."/>
            <person name="Walker M."/>
            <person name="Wu D."/>
            <person name="Yu G."/>
            <person name="Fraser C.M."/>
            <person name="Venter J.C."/>
            <person name="Davis R.W."/>
        </authorList>
    </citation>
    <scope>NUCLEOTIDE SEQUENCE [LARGE SCALE GENOMIC DNA]</scope>
    <source>
        <strain>cv. Columbia</strain>
    </source>
</reference>
<reference key="3">
    <citation type="journal article" date="2017" name="Plant J.">
        <title>Araport11: a complete reannotation of the Arabidopsis thaliana reference genome.</title>
        <authorList>
            <person name="Cheng C.Y."/>
            <person name="Krishnakumar V."/>
            <person name="Chan A.P."/>
            <person name="Thibaud-Nissen F."/>
            <person name="Schobel S."/>
            <person name="Town C.D."/>
        </authorList>
    </citation>
    <scope>GENOME REANNOTATION</scope>
    <source>
        <strain>cv. Columbia</strain>
    </source>
</reference>
<reference key="4">
    <citation type="journal article" date="2006" name="Plant Biotechnol. J.">
        <title>Simultaneous high-throughput recombinational cloning of open reading frames in closed and open configurations.</title>
        <authorList>
            <person name="Underwood B.A."/>
            <person name="Vanderhaeghen R."/>
            <person name="Whitford R."/>
            <person name="Town C.D."/>
            <person name="Hilson P."/>
        </authorList>
    </citation>
    <scope>NUCLEOTIDE SEQUENCE [LARGE SCALE MRNA]</scope>
    <source>
        <strain>cv. Columbia</strain>
    </source>
</reference>
<reference key="5">
    <citation type="journal article" date="2007" name="Plant Physiol.">
        <title>The Arabidopsis BAP1 and BAP2 genes are general inhibitors of programmed cell death.</title>
        <authorList>
            <person name="Yang H."/>
            <person name="Yang S."/>
            <person name="Li Y."/>
            <person name="Hua J."/>
        </authorList>
    </citation>
    <scope>INTERACTION WITH BAP1 AND BAP2</scope>
</reference>
<reference key="6">
    <citation type="journal article" date="2009" name="Mol. Plant Microbe Interact.">
        <title>Multiple R-like genes are negatively regulated by BON1 and BON3 in arabidopsis.</title>
        <authorList>
            <person name="Li Y."/>
            <person name="Pennington B.O."/>
            <person name="Hua J."/>
        </authorList>
    </citation>
    <scope>FUNCTION</scope>
</reference>
<organism>
    <name type="scientific">Arabidopsis thaliana</name>
    <name type="common">Mouse-ear cress</name>
    <dbReference type="NCBI Taxonomy" id="3702"/>
    <lineage>
        <taxon>Eukaryota</taxon>
        <taxon>Viridiplantae</taxon>
        <taxon>Streptophyta</taxon>
        <taxon>Embryophyta</taxon>
        <taxon>Tracheophyta</taxon>
        <taxon>Spermatophyta</taxon>
        <taxon>Magnoliopsida</taxon>
        <taxon>eudicotyledons</taxon>
        <taxon>Gunneridae</taxon>
        <taxon>Pentapetalae</taxon>
        <taxon>rosids</taxon>
        <taxon>malvids</taxon>
        <taxon>Brassicales</taxon>
        <taxon>Brassicaceae</taxon>
        <taxon>Camelineae</taxon>
        <taxon>Arabidopsis</taxon>
    </lineage>
</organism>
<protein>
    <recommendedName>
        <fullName>Protein BONZAI 3</fullName>
    </recommendedName>
</protein>
<comment type="function">
    <text evidence="1 6 8">Negative regulator of cell death and defense responses. Repress a number of R genes and may have effects in promoting growth and development. May function in membrane trafficking and in fusion of vesicles with plasma membrane (By similarity).</text>
</comment>
<comment type="cofactor">
    <cofactor evidence="3">
        <name>Ca(2+)</name>
        <dbReference type="ChEBI" id="CHEBI:29108"/>
    </cofactor>
</comment>
<comment type="subunit">
    <text evidence="7">Interacts with BAP1 and BAP2.</text>
</comment>
<comment type="subcellular location">
    <subcellularLocation>
        <location evidence="9">Cell membrane</location>
        <topology evidence="9">Lipid-anchor</topology>
    </subcellularLocation>
</comment>
<comment type="tissue specificity">
    <text evidence="6">Expressed at an extremely low level.</text>
</comment>
<comment type="disruption phenotype">
    <text evidence="6">No visible phenotype; due to partial redundancy with BON1 and BON2. Bon2 and bon3 double mutant has no visible phenotype. bon1 and bon3 double mutant is seedling-lethal when grown at 22 degrees Celsius. Bon1, bon2 and bon3 triple mutant is seedling-lethal at any temperature.</text>
</comment>
<comment type="similarity">
    <text evidence="9">Belongs to the copine family.</text>
</comment>
<comment type="sequence caution" evidence="9">
    <conflict type="erroneous gene model prediction">
        <sequence resource="EMBL-CDS" id="AAB70417"/>
    </conflict>
</comment>
<comment type="sequence caution" evidence="9">
    <conflict type="frameshift">
        <sequence resource="EMBL-CDS" id="ABE97164"/>
    </conflict>
</comment>